<reference key="1">
    <citation type="submission" date="2007-03" db="EMBL/GenBank/DDBJ databases">
        <authorList>
            <consortium name="NIH - Xenopus Gene Collection (XGC) project"/>
        </authorList>
    </citation>
    <scope>NUCLEOTIDE SEQUENCE [LARGE SCALE MRNA]</scope>
    <source>
        <tissue>Brain</tissue>
    </source>
</reference>
<protein>
    <recommendedName>
        <fullName>Cyclin-dependent kinase 14</fullName>
        <ecNumber>2.7.11.22</ecNumber>
    </recommendedName>
    <alternativeName>
        <fullName>Cell division protein kinase 14</fullName>
    </alternativeName>
</protein>
<keyword id="KW-0067">ATP-binding</keyword>
<keyword id="KW-0131">Cell cycle</keyword>
<keyword id="KW-0132">Cell division</keyword>
<keyword id="KW-1003">Cell membrane</keyword>
<keyword id="KW-0418">Kinase</keyword>
<keyword id="KW-0472">Membrane</keyword>
<keyword id="KW-0547">Nucleotide-binding</keyword>
<keyword id="KW-1185">Reference proteome</keyword>
<keyword id="KW-0723">Serine/threonine-protein kinase</keyword>
<keyword id="KW-0808">Transferase</keyword>
<keyword id="KW-0879">Wnt signaling pathway</keyword>
<organism>
    <name type="scientific">Xenopus tropicalis</name>
    <name type="common">Western clawed frog</name>
    <name type="synonym">Silurana tropicalis</name>
    <dbReference type="NCBI Taxonomy" id="8364"/>
    <lineage>
        <taxon>Eukaryota</taxon>
        <taxon>Metazoa</taxon>
        <taxon>Chordata</taxon>
        <taxon>Craniata</taxon>
        <taxon>Vertebrata</taxon>
        <taxon>Euteleostomi</taxon>
        <taxon>Amphibia</taxon>
        <taxon>Batrachia</taxon>
        <taxon>Anura</taxon>
        <taxon>Pipoidea</taxon>
        <taxon>Pipidae</taxon>
        <taxon>Xenopodinae</taxon>
        <taxon>Xenopus</taxon>
        <taxon>Silurana</taxon>
    </lineage>
</organism>
<comment type="function">
    <text evidence="1">Serine/threonine-protein kinase involved in the control of the eukaryotic cell cycle, whose activity is controlled by an associated cyclin. Acts as a cell-cycle regulator of Wnt signaling pathway during G2/M phase by mediating the phosphorylation of lrp6, leading to the activation of the Wnt signaling pathway (By similarity).</text>
</comment>
<comment type="catalytic activity">
    <reaction>
        <text>L-seryl-[protein] + ATP = O-phospho-L-seryl-[protein] + ADP + H(+)</text>
        <dbReference type="Rhea" id="RHEA:17989"/>
        <dbReference type="Rhea" id="RHEA-COMP:9863"/>
        <dbReference type="Rhea" id="RHEA-COMP:11604"/>
        <dbReference type="ChEBI" id="CHEBI:15378"/>
        <dbReference type="ChEBI" id="CHEBI:29999"/>
        <dbReference type="ChEBI" id="CHEBI:30616"/>
        <dbReference type="ChEBI" id="CHEBI:83421"/>
        <dbReference type="ChEBI" id="CHEBI:456216"/>
        <dbReference type="EC" id="2.7.11.22"/>
    </reaction>
</comment>
<comment type="catalytic activity">
    <reaction>
        <text>L-threonyl-[protein] + ATP = O-phospho-L-threonyl-[protein] + ADP + H(+)</text>
        <dbReference type="Rhea" id="RHEA:46608"/>
        <dbReference type="Rhea" id="RHEA-COMP:11060"/>
        <dbReference type="Rhea" id="RHEA-COMP:11605"/>
        <dbReference type="ChEBI" id="CHEBI:15378"/>
        <dbReference type="ChEBI" id="CHEBI:30013"/>
        <dbReference type="ChEBI" id="CHEBI:30616"/>
        <dbReference type="ChEBI" id="CHEBI:61977"/>
        <dbReference type="ChEBI" id="CHEBI:456216"/>
        <dbReference type="EC" id="2.7.11.22"/>
    </reaction>
</comment>
<comment type="subunit">
    <text evidence="1">Interacts with ccny; ccny mediates its recruitment to the plasma membrane and promotes phosphorylation of lrp6.</text>
</comment>
<comment type="subcellular location">
    <subcellularLocation>
        <location evidence="1">Cell membrane</location>
        <topology evidence="1">Peripheral membrane protein</topology>
    </subcellularLocation>
    <text evidence="1">Recruited to the cell membrane by CCNY.</text>
</comment>
<comment type="similarity">
    <text evidence="5">Belongs to the protein kinase superfamily. CMGC Ser/Thr protein kinase family. CDC2/CDKX subfamily.</text>
</comment>
<dbReference type="EC" id="2.7.11.22"/>
<dbReference type="EMBL" id="BC136183">
    <property type="protein sequence ID" value="AAI36184.1"/>
    <property type="molecule type" value="mRNA"/>
</dbReference>
<dbReference type="RefSeq" id="NP_001096458.1">
    <property type="nucleotide sequence ID" value="NM_001102988.1"/>
</dbReference>
<dbReference type="SMR" id="A4IIW7"/>
<dbReference type="FunCoup" id="A4IIW7">
    <property type="interactions" value="2401"/>
</dbReference>
<dbReference type="STRING" id="8364.ENSXETP00000021459"/>
<dbReference type="PaxDb" id="8364-ENSXETP00000007502"/>
<dbReference type="DNASU" id="100125075"/>
<dbReference type="GeneID" id="100125075"/>
<dbReference type="KEGG" id="xtr:100125075"/>
<dbReference type="AGR" id="Xenbase:XB-GENE-943250"/>
<dbReference type="CTD" id="5218"/>
<dbReference type="Xenbase" id="XB-GENE-943250">
    <property type="gene designation" value="cdk14"/>
</dbReference>
<dbReference type="eggNOG" id="KOG0594">
    <property type="taxonomic scope" value="Eukaryota"/>
</dbReference>
<dbReference type="HOGENOM" id="CLU_000288_181_6_1"/>
<dbReference type="InParanoid" id="A4IIW7"/>
<dbReference type="OrthoDB" id="1732493at2759"/>
<dbReference type="Proteomes" id="UP000008143">
    <property type="component" value="Chromosome 6"/>
</dbReference>
<dbReference type="Bgee" id="ENSXETG00000003466">
    <property type="expression patterns" value="Expressed in brain and 9 other cell types or tissues"/>
</dbReference>
<dbReference type="ExpressionAtlas" id="A4IIW7">
    <property type="expression patterns" value="differential"/>
</dbReference>
<dbReference type="GO" id="GO:0000308">
    <property type="term" value="C:cytoplasmic cyclin-dependent protein kinase holoenzyme complex"/>
    <property type="evidence" value="ECO:0000250"/>
    <property type="project" value="UniProtKB"/>
</dbReference>
<dbReference type="GO" id="GO:0005886">
    <property type="term" value="C:plasma membrane"/>
    <property type="evidence" value="ECO:0000250"/>
    <property type="project" value="UniProtKB"/>
</dbReference>
<dbReference type="GO" id="GO:0005524">
    <property type="term" value="F:ATP binding"/>
    <property type="evidence" value="ECO:0007669"/>
    <property type="project" value="UniProtKB-KW"/>
</dbReference>
<dbReference type="GO" id="GO:0004693">
    <property type="term" value="F:cyclin-dependent protein serine/threonine kinase activity"/>
    <property type="evidence" value="ECO:0000250"/>
    <property type="project" value="UniProtKB"/>
</dbReference>
<dbReference type="GO" id="GO:0106310">
    <property type="term" value="F:protein serine kinase activity"/>
    <property type="evidence" value="ECO:0007669"/>
    <property type="project" value="RHEA"/>
</dbReference>
<dbReference type="GO" id="GO:0051301">
    <property type="term" value="P:cell division"/>
    <property type="evidence" value="ECO:0007669"/>
    <property type="project" value="UniProtKB-KW"/>
</dbReference>
<dbReference type="GO" id="GO:0000086">
    <property type="term" value="P:G2/M transition of mitotic cell cycle"/>
    <property type="evidence" value="ECO:0000250"/>
    <property type="project" value="UniProtKB"/>
</dbReference>
<dbReference type="GO" id="GO:0060828">
    <property type="term" value="P:regulation of canonical Wnt signaling pathway"/>
    <property type="evidence" value="ECO:0000250"/>
    <property type="project" value="UniProtKB"/>
</dbReference>
<dbReference type="GO" id="GO:0016055">
    <property type="term" value="P:Wnt signaling pathway"/>
    <property type="evidence" value="ECO:0007669"/>
    <property type="project" value="UniProtKB-KW"/>
</dbReference>
<dbReference type="CDD" id="cd07869">
    <property type="entry name" value="STKc_PFTAIRE1"/>
    <property type="match status" value="1"/>
</dbReference>
<dbReference type="FunFam" id="1.10.510.10:FF:000131">
    <property type="entry name" value="cyclin-dependent kinase 14 isoform X1"/>
    <property type="match status" value="1"/>
</dbReference>
<dbReference type="FunFam" id="3.30.200.20:FF:000007">
    <property type="entry name" value="Cyclin-dependent kinase 14, putative"/>
    <property type="match status" value="1"/>
</dbReference>
<dbReference type="Gene3D" id="3.30.200.20">
    <property type="entry name" value="Phosphorylase Kinase, domain 1"/>
    <property type="match status" value="1"/>
</dbReference>
<dbReference type="Gene3D" id="1.10.510.10">
    <property type="entry name" value="Transferase(Phosphotransferase) domain 1"/>
    <property type="match status" value="1"/>
</dbReference>
<dbReference type="InterPro" id="IPR050108">
    <property type="entry name" value="CDK"/>
</dbReference>
<dbReference type="InterPro" id="IPR011009">
    <property type="entry name" value="Kinase-like_dom_sf"/>
</dbReference>
<dbReference type="InterPro" id="IPR000719">
    <property type="entry name" value="Prot_kinase_dom"/>
</dbReference>
<dbReference type="InterPro" id="IPR017441">
    <property type="entry name" value="Protein_kinase_ATP_BS"/>
</dbReference>
<dbReference type="InterPro" id="IPR008271">
    <property type="entry name" value="Ser/Thr_kinase_AS"/>
</dbReference>
<dbReference type="PANTHER" id="PTHR24056">
    <property type="entry name" value="CELL DIVISION PROTEIN KINASE"/>
    <property type="match status" value="1"/>
</dbReference>
<dbReference type="PANTHER" id="PTHR24056:SF154">
    <property type="entry name" value="CYCLIN-DEPENDENT KINASE 14"/>
    <property type="match status" value="1"/>
</dbReference>
<dbReference type="Pfam" id="PF00069">
    <property type="entry name" value="Pkinase"/>
    <property type="match status" value="1"/>
</dbReference>
<dbReference type="SMART" id="SM00220">
    <property type="entry name" value="S_TKc"/>
    <property type="match status" value="1"/>
</dbReference>
<dbReference type="SUPFAM" id="SSF56112">
    <property type="entry name" value="Protein kinase-like (PK-like)"/>
    <property type="match status" value="1"/>
</dbReference>
<dbReference type="PROSITE" id="PS00107">
    <property type="entry name" value="PROTEIN_KINASE_ATP"/>
    <property type="match status" value="1"/>
</dbReference>
<dbReference type="PROSITE" id="PS50011">
    <property type="entry name" value="PROTEIN_KINASE_DOM"/>
    <property type="match status" value="1"/>
</dbReference>
<dbReference type="PROSITE" id="PS00108">
    <property type="entry name" value="PROTEIN_KINASE_ST"/>
    <property type="match status" value="1"/>
</dbReference>
<accession>A4IIW7</accession>
<evidence type="ECO:0000250" key="1"/>
<evidence type="ECO:0000255" key="2">
    <source>
        <dbReference type="PROSITE-ProRule" id="PRU00159"/>
    </source>
</evidence>
<evidence type="ECO:0000255" key="3">
    <source>
        <dbReference type="PROSITE-ProRule" id="PRU10027"/>
    </source>
</evidence>
<evidence type="ECO:0000256" key="4">
    <source>
        <dbReference type="SAM" id="MobiDB-lite"/>
    </source>
</evidence>
<evidence type="ECO:0000305" key="5"/>
<name>CDK14_XENTR</name>
<proteinExistence type="evidence at transcript level"/>
<feature type="chain" id="PRO_0000391904" description="Cyclin-dependent kinase 14">
    <location>
        <begin position="1"/>
        <end position="423"/>
    </location>
</feature>
<feature type="domain" description="Protein kinase" evidence="2">
    <location>
        <begin position="89"/>
        <end position="373"/>
    </location>
</feature>
<feature type="region of interest" description="Disordered" evidence="4">
    <location>
        <begin position="62"/>
        <end position="85"/>
    </location>
</feature>
<feature type="active site" description="Proton acceptor" evidence="2 3">
    <location>
        <position position="210"/>
    </location>
</feature>
<feature type="binding site" evidence="2">
    <location>
        <begin position="95"/>
        <end position="103"/>
    </location>
    <ligand>
        <name>ATP</name>
        <dbReference type="ChEBI" id="CHEBI:30616"/>
    </ligand>
</feature>
<feature type="binding site" evidence="2">
    <location>
        <position position="118"/>
    </location>
    <ligand>
        <name>ATP</name>
        <dbReference type="ChEBI" id="CHEBI:30616"/>
    </ligand>
</feature>
<gene>
    <name type="primary">cdk14</name>
    <name type="synonym">pftk1</name>
</gene>
<sequence>MSTRNCQGIDSVIKPLDTIPEDKKVRVQRTQSSFDPFEKTSNQVKRVHSENNACINFKSASVGKESPKVRRHSSPSSPTSPKFGKADSYEKLEKLGEGSYATVYKGKSKVNGKLVALKVIRLQEEEGTPFTAIREASLLKGLKHANIVLLHDIIHTKETLTLVFEYVHTDLCQYMDKHPGGLNPENVKLFLFQLLRGLSYIHQGHILHRDLKPQNLLISDTGELKLADFGLARAKSVPSHTYSNEVVTLWYRPPDVLLGSTDYSTCLDMWGVGCIFVEMIQGVAAFPGMKDIQDQLERIFLILGTPNEETWPGVHSLPHFKLERFTQYGPKNLRQAWNKLSYVNHAEDLASKLLQCFPKNRLSAQAALNHDYFSDLPPRLWELSDMSSIFTVPNVKLQPEAGESMRVFGKNNSFSKSLSNSKH</sequence>